<organism>
    <name type="scientific">Yersinia pestis</name>
    <dbReference type="NCBI Taxonomy" id="632"/>
    <lineage>
        <taxon>Bacteria</taxon>
        <taxon>Pseudomonadati</taxon>
        <taxon>Pseudomonadota</taxon>
        <taxon>Gammaproteobacteria</taxon>
        <taxon>Enterobacterales</taxon>
        <taxon>Yersiniaceae</taxon>
        <taxon>Yersinia</taxon>
    </lineage>
</organism>
<proteinExistence type="inferred from homology"/>
<accession>Q8ZJJ4</accession>
<accession>Q0WKJ2</accession>
<name>HSLV_YERPE</name>
<evidence type="ECO:0000250" key="1"/>
<evidence type="ECO:0000255" key="2">
    <source>
        <dbReference type="HAMAP-Rule" id="MF_00248"/>
    </source>
</evidence>
<feature type="initiator methionine" description="Removed" evidence="1">
    <location>
        <position position="1"/>
    </location>
</feature>
<feature type="chain" id="PRO_0000148168" description="ATP-dependent protease subunit HslV">
    <location>
        <begin position="2"/>
        <end position="174"/>
    </location>
</feature>
<feature type="active site" evidence="2">
    <location>
        <position position="2"/>
    </location>
</feature>
<feature type="binding site" evidence="2">
    <location>
        <position position="157"/>
    </location>
    <ligand>
        <name>Na(+)</name>
        <dbReference type="ChEBI" id="CHEBI:29101"/>
    </ligand>
</feature>
<feature type="binding site" evidence="2">
    <location>
        <position position="160"/>
    </location>
    <ligand>
        <name>Na(+)</name>
        <dbReference type="ChEBI" id="CHEBI:29101"/>
    </ligand>
</feature>
<feature type="binding site" evidence="2">
    <location>
        <position position="163"/>
    </location>
    <ligand>
        <name>Na(+)</name>
        <dbReference type="ChEBI" id="CHEBI:29101"/>
    </ligand>
</feature>
<comment type="function">
    <text evidence="2">Protease subunit of a proteasome-like degradation complex believed to be a general protein degrading machinery.</text>
</comment>
<comment type="catalytic activity">
    <reaction evidence="2">
        <text>ATP-dependent cleavage of peptide bonds with broad specificity.</text>
        <dbReference type="EC" id="3.4.25.2"/>
    </reaction>
</comment>
<comment type="activity regulation">
    <text evidence="2">Allosterically activated by HslU binding.</text>
</comment>
<comment type="subunit">
    <text evidence="2">A double ring-shaped homohexamer of HslV is capped on each side by a ring-shaped HslU homohexamer. The assembly of the HslU/HslV complex is dependent on binding of ATP.</text>
</comment>
<comment type="subcellular location">
    <subcellularLocation>
        <location evidence="2">Cytoplasm</location>
    </subcellularLocation>
</comment>
<comment type="similarity">
    <text evidence="2">Belongs to the peptidase T1B family. HslV subfamily.</text>
</comment>
<sequence>MTTIVSVRRDGHVVIGGDGQVTLGNTVMKGNAKKVRRLYNNKVIAGFAGGTADAFTLFELFERKLEMHQGHLTKAAVELAKDWRTDRMLRKLEALLAVADETASLIITGNGDVVQPEDDLIAIGSGGPYAQSAARALLENTELGARDIVEKSLSIAGDICIYTNRFQTIEELTY</sequence>
<protein>
    <recommendedName>
        <fullName evidence="2">ATP-dependent protease subunit HslV</fullName>
        <ecNumber evidence="2">3.4.25.2</ecNumber>
    </recommendedName>
</protein>
<reference key="1">
    <citation type="journal article" date="2001" name="Nature">
        <title>Genome sequence of Yersinia pestis, the causative agent of plague.</title>
        <authorList>
            <person name="Parkhill J."/>
            <person name="Wren B.W."/>
            <person name="Thomson N.R."/>
            <person name="Titball R.W."/>
            <person name="Holden M.T.G."/>
            <person name="Prentice M.B."/>
            <person name="Sebaihia M."/>
            <person name="James K.D."/>
            <person name="Churcher C.M."/>
            <person name="Mungall K.L."/>
            <person name="Baker S."/>
            <person name="Basham D."/>
            <person name="Bentley S.D."/>
            <person name="Brooks K."/>
            <person name="Cerdeno-Tarraga A.-M."/>
            <person name="Chillingworth T."/>
            <person name="Cronin A."/>
            <person name="Davies R.M."/>
            <person name="Davis P."/>
            <person name="Dougan G."/>
            <person name="Feltwell T."/>
            <person name="Hamlin N."/>
            <person name="Holroyd S."/>
            <person name="Jagels K."/>
            <person name="Karlyshev A.V."/>
            <person name="Leather S."/>
            <person name="Moule S."/>
            <person name="Oyston P.C.F."/>
            <person name="Quail M.A."/>
            <person name="Rutherford K.M."/>
            <person name="Simmonds M."/>
            <person name="Skelton J."/>
            <person name="Stevens K."/>
            <person name="Whitehead S."/>
            <person name="Barrell B.G."/>
        </authorList>
    </citation>
    <scope>NUCLEOTIDE SEQUENCE [LARGE SCALE GENOMIC DNA]</scope>
    <source>
        <strain>CO-92 / Biovar Orientalis</strain>
    </source>
</reference>
<reference key="2">
    <citation type="journal article" date="2002" name="J. Bacteriol.">
        <title>Genome sequence of Yersinia pestis KIM.</title>
        <authorList>
            <person name="Deng W."/>
            <person name="Burland V."/>
            <person name="Plunkett G. III"/>
            <person name="Boutin A."/>
            <person name="Mayhew G.F."/>
            <person name="Liss P."/>
            <person name="Perna N.T."/>
            <person name="Rose D.J."/>
            <person name="Mau B."/>
            <person name="Zhou S."/>
            <person name="Schwartz D.C."/>
            <person name="Fetherston J.D."/>
            <person name="Lindler L.E."/>
            <person name="Brubaker R.R."/>
            <person name="Plano G.V."/>
            <person name="Straley S.C."/>
            <person name="McDonough K.A."/>
            <person name="Nilles M.L."/>
            <person name="Matson J.S."/>
            <person name="Blattner F.R."/>
            <person name="Perry R.D."/>
        </authorList>
    </citation>
    <scope>NUCLEOTIDE SEQUENCE [LARGE SCALE GENOMIC DNA]</scope>
    <source>
        <strain>KIM10+ / Biovar Mediaevalis</strain>
    </source>
</reference>
<reference key="3">
    <citation type="journal article" date="2004" name="DNA Res.">
        <title>Complete genome sequence of Yersinia pestis strain 91001, an isolate avirulent to humans.</title>
        <authorList>
            <person name="Song Y."/>
            <person name="Tong Z."/>
            <person name="Wang J."/>
            <person name="Wang L."/>
            <person name="Guo Z."/>
            <person name="Han Y."/>
            <person name="Zhang J."/>
            <person name="Pei D."/>
            <person name="Zhou D."/>
            <person name="Qin H."/>
            <person name="Pang X."/>
            <person name="Han Y."/>
            <person name="Zhai J."/>
            <person name="Li M."/>
            <person name="Cui B."/>
            <person name="Qi Z."/>
            <person name="Jin L."/>
            <person name="Dai R."/>
            <person name="Chen F."/>
            <person name="Li S."/>
            <person name="Ye C."/>
            <person name="Du Z."/>
            <person name="Lin W."/>
            <person name="Wang J."/>
            <person name="Yu J."/>
            <person name="Yang H."/>
            <person name="Wang J."/>
            <person name="Huang P."/>
            <person name="Yang R."/>
        </authorList>
    </citation>
    <scope>NUCLEOTIDE SEQUENCE [LARGE SCALE GENOMIC DNA]</scope>
    <source>
        <strain>91001 / Biovar Mediaevalis</strain>
    </source>
</reference>
<keyword id="KW-0021">Allosteric enzyme</keyword>
<keyword id="KW-0963">Cytoplasm</keyword>
<keyword id="KW-0378">Hydrolase</keyword>
<keyword id="KW-0479">Metal-binding</keyword>
<keyword id="KW-0645">Protease</keyword>
<keyword id="KW-1185">Reference proteome</keyword>
<keyword id="KW-0915">Sodium</keyword>
<keyword id="KW-0888">Threonine protease</keyword>
<dbReference type="EC" id="3.4.25.2" evidence="2"/>
<dbReference type="EMBL" id="AL590842">
    <property type="protein sequence ID" value="CAL18794.1"/>
    <property type="molecule type" value="Genomic_DNA"/>
</dbReference>
<dbReference type="EMBL" id="AE009952">
    <property type="protein sequence ID" value="AAM83887.1"/>
    <property type="molecule type" value="Genomic_DNA"/>
</dbReference>
<dbReference type="EMBL" id="AE017042">
    <property type="protein sequence ID" value="AAS60387.1"/>
    <property type="molecule type" value="Genomic_DNA"/>
</dbReference>
<dbReference type="PIR" id="AI0013">
    <property type="entry name" value="AI0013"/>
</dbReference>
<dbReference type="RefSeq" id="WP_002208942.1">
    <property type="nucleotide sequence ID" value="NZ_WUCM01000087.1"/>
</dbReference>
<dbReference type="RefSeq" id="YP_002345196.1">
    <property type="nucleotide sequence ID" value="NC_003143.1"/>
</dbReference>
<dbReference type="SMR" id="Q8ZJJ4"/>
<dbReference type="STRING" id="214092.YPO0106"/>
<dbReference type="MEROPS" id="T01.006"/>
<dbReference type="PaxDb" id="214092-YPO0106"/>
<dbReference type="DNASU" id="1145242"/>
<dbReference type="EnsemblBacteria" id="AAS60387">
    <property type="protein sequence ID" value="AAS60387"/>
    <property type="gene ID" value="YP_0108"/>
</dbReference>
<dbReference type="GeneID" id="97458253"/>
<dbReference type="KEGG" id="ype:YPO0106"/>
<dbReference type="KEGG" id="ypk:y0295"/>
<dbReference type="KEGG" id="ypm:YP_0108"/>
<dbReference type="PATRIC" id="fig|214092.21.peg.332"/>
<dbReference type="eggNOG" id="COG5405">
    <property type="taxonomic scope" value="Bacteria"/>
</dbReference>
<dbReference type="HOGENOM" id="CLU_093872_1_0_6"/>
<dbReference type="OMA" id="WRTDKML"/>
<dbReference type="OrthoDB" id="9804884at2"/>
<dbReference type="Proteomes" id="UP000000815">
    <property type="component" value="Chromosome"/>
</dbReference>
<dbReference type="Proteomes" id="UP000001019">
    <property type="component" value="Chromosome"/>
</dbReference>
<dbReference type="Proteomes" id="UP000002490">
    <property type="component" value="Chromosome"/>
</dbReference>
<dbReference type="GO" id="GO:0005737">
    <property type="term" value="C:cytoplasm"/>
    <property type="evidence" value="ECO:0000318"/>
    <property type="project" value="GO_Central"/>
</dbReference>
<dbReference type="GO" id="GO:0009376">
    <property type="term" value="C:HslUV protease complex"/>
    <property type="evidence" value="ECO:0007669"/>
    <property type="project" value="UniProtKB-UniRule"/>
</dbReference>
<dbReference type="GO" id="GO:0005839">
    <property type="term" value="C:proteasome core complex"/>
    <property type="evidence" value="ECO:0007669"/>
    <property type="project" value="InterPro"/>
</dbReference>
<dbReference type="GO" id="GO:0046872">
    <property type="term" value="F:metal ion binding"/>
    <property type="evidence" value="ECO:0007669"/>
    <property type="project" value="UniProtKB-KW"/>
</dbReference>
<dbReference type="GO" id="GO:0004298">
    <property type="term" value="F:threonine-type endopeptidase activity"/>
    <property type="evidence" value="ECO:0007669"/>
    <property type="project" value="UniProtKB-KW"/>
</dbReference>
<dbReference type="GO" id="GO:0051603">
    <property type="term" value="P:proteolysis involved in protein catabolic process"/>
    <property type="evidence" value="ECO:0000318"/>
    <property type="project" value="GO_Central"/>
</dbReference>
<dbReference type="CDD" id="cd01913">
    <property type="entry name" value="protease_HslV"/>
    <property type="match status" value="1"/>
</dbReference>
<dbReference type="FunFam" id="3.60.20.10:FF:000002">
    <property type="entry name" value="ATP-dependent protease subunit HslV"/>
    <property type="match status" value="1"/>
</dbReference>
<dbReference type="Gene3D" id="3.60.20.10">
    <property type="entry name" value="Glutamine Phosphoribosylpyrophosphate, subunit 1, domain 1"/>
    <property type="match status" value="1"/>
</dbReference>
<dbReference type="HAMAP" id="MF_00248">
    <property type="entry name" value="HslV"/>
    <property type="match status" value="1"/>
</dbReference>
<dbReference type="InterPro" id="IPR022281">
    <property type="entry name" value="ATP-dep_Prtase_HsIV_su"/>
</dbReference>
<dbReference type="InterPro" id="IPR029055">
    <property type="entry name" value="Ntn_hydrolases_N"/>
</dbReference>
<dbReference type="InterPro" id="IPR001353">
    <property type="entry name" value="Proteasome_sua/b"/>
</dbReference>
<dbReference type="InterPro" id="IPR023333">
    <property type="entry name" value="Proteasome_suB-type"/>
</dbReference>
<dbReference type="NCBIfam" id="TIGR03692">
    <property type="entry name" value="ATP_dep_HslV"/>
    <property type="match status" value="1"/>
</dbReference>
<dbReference type="NCBIfam" id="NF003964">
    <property type="entry name" value="PRK05456.1"/>
    <property type="match status" value="1"/>
</dbReference>
<dbReference type="PANTHER" id="PTHR32194:SF0">
    <property type="entry name" value="ATP-DEPENDENT PROTEASE SUBUNIT HSLV"/>
    <property type="match status" value="1"/>
</dbReference>
<dbReference type="PANTHER" id="PTHR32194">
    <property type="entry name" value="METALLOPROTEASE TLDD"/>
    <property type="match status" value="1"/>
</dbReference>
<dbReference type="Pfam" id="PF00227">
    <property type="entry name" value="Proteasome"/>
    <property type="match status" value="1"/>
</dbReference>
<dbReference type="PIRSF" id="PIRSF039093">
    <property type="entry name" value="HslV"/>
    <property type="match status" value="1"/>
</dbReference>
<dbReference type="SUPFAM" id="SSF56235">
    <property type="entry name" value="N-terminal nucleophile aminohydrolases (Ntn hydrolases)"/>
    <property type="match status" value="1"/>
</dbReference>
<dbReference type="PROSITE" id="PS51476">
    <property type="entry name" value="PROTEASOME_BETA_2"/>
    <property type="match status" value="1"/>
</dbReference>
<gene>
    <name evidence="2" type="primary">hslV</name>
    <name type="ordered locus">YPO0106</name>
    <name type="ordered locus">y0295</name>
    <name type="ordered locus">YP_0108</name>
</gene>